<feature type="chain" id="PRO_0000083669" description="3-isopropylmalate dehydrogenase">
    <location>
        <begin position="1" status="less than"/>
        <end position="126"/>
    </location>
</feature>
<feature type="binding site" evidence="1">
    <location>
        <position position="14"/>
    </location>
    <ligand>
        <name>Mg(2+)</name>
        <dbReference type="ChEBI" id="CHEBI:18420"/>
    </ligand>
</feature>
<feature type="binding site" evidence="1">
    <location>
        <position position="18"/>
    </location>
    <ligand>
        <name>Mg(2+)</name>
        <dbReference type="ChEBI" id="CHEBI:18420"/>
    </ligand>
</feature>
<feature type="binding site" evidence="1">
    <location>
        <begin position="48"/>
        <end position="60"/>
    </location>
    <ligand>
        <name>NAD(+)</name>
        <dbReference type="ChEBI" id="CHEBI:57540"/>
    </ligand>
</feature>
<feature type="non-terminal residue">
    <location>
        <position position="1"/>
    </location>
</feature>
<protein>
    <recommendedName>
        <fullName>3-isopropylmalate dehydrogenase</fullName>
        <ecNumber>1.1.1.85</ecNumber>
    </recommendedName>
    <alternativeName>
        <fullName>3-IPM-DH</fullName>
    </alternativeName>
    <alternativeName>
        <fullName>Beta-IPM dehydrogenase</fullName>
        <shortName>IMDH</shortName>
    </alternativeName>
</protein>
<proteinExistence type="inferred from homology"/>
<name>LEU3_BUCUL</name>
<keyword id="KW-0028">Amino-acid biosynthesis</keyword>
<keyword id="KW-0100">Branched-chain amino acid biosynthesis</keyword>
<keyword id="KW-0963">Cytoplasm</keyword>
<keyword id="KW-0432">Leucine biosynthesis</keyword>
<keyword id="KW-0460">Magnesium</keyword>
<keyword id="KW-0464">Manganese</keyword>
<keyword id="KW-0479">Metal-binding</keyword>
<keyword id="KW-0520">NAD</keyword>
<keyword id="KW-0560">Oxidoreductase</keyword>
<sequence>NQFDILLCSNLFGDIISDECAVITGSIGMLPSASFNEKNFGLYEPAGGSAPDIAGKNIANPIAQILSLSMLVRYGMKLKKIADKIDKSVASALKAGYRTADISNNNSYLKTNEMGDVISDFLINGK</sequence>
<comment type="function">
    <text evidence="1">Catalyzes the oxidation of 3-carboxy-2-hydroxy-4-methylpentanoate (3-isopropylmalate) to 3-carboxy-4-methyl-2-oxopentanoate. The product decarboxylates to 4-methyl-2 oxopentanoate (By similarity).</text>
</comment>
<comment type="catalytic activity">
    <reaction>
        <text>(2R,3S)-3-isopropylmalate + NAD(+) = 4-methyl-2-oxopentanoate + CO2 + NADH</text>
        <dbReference type="Rhea" id="RHEA:32271"/>
        <dbReference type="ChEBI" id="CHEBI:16526"/>
        <dbReference type="ChEBI" id="CHEBI:17865"/>
        <dbReference type="ChEBI" id="CHEBI:35121"/>
        <dbReference type="ChEBI" id="CHEBI:57540"/>
        <dbReference type="ChEBI" id="CHEBI:57945"/>
        <dbReference type="EC" id="1.1.1.85"/>
    </reaction>
</comment>
<comment type="cofactor">
    <cofactor evidence="1">
        <name>Mg(2+)</name>
        <dbReference type="ChEBI" id="CHEBI:18420"/>
    </cofactor>
    <cofactor evidence="1">
        <name>Mn(2+)</name>
        <dbReference type="ChEBI" id="CHEBI:29035"/>
    </cofactor>
    <text evidence="1">Binds 1 Mg(2+) or Mn(2+) ion per subunit.</text>
</comment>
<comment type="pathway">
    <text>Amino-acid biosynthesis; L-leucine biosynthesis; L-leucine from 3-methyl-2-oxobutanoate: step 3/4.</text>
</comment>
<comment type="subunit">
    <text evidence="1">Homodimer.</text>
</comment>
<comment type="subcellular location">
    <subcellularLocation>
        <location evidence="1">Cytoplasm</location>
    </subcellularLocation>
</comment>
<comment type="similarity">
    <text evidence="2">Belongs to the isocitrate and isopropylmalate dehydrogenases family. LeuB type 1 subfamily.</text>
</comment>
<organism>
    <name type="scientific">Buchnera aphidicola subsp. Uroleucon rurale</name>
    <dbReference type="NCBI Taxonomy" id="168386"/>
    <lineage>
        <taxon>Bacteria</taxon>
        <taxon>Pseudomonadati</taxon>
        <taxon>Pseudomonadota</taxon>
        <taxon>Gammaproteobacteria</taxon>
        <taxon>Enterobacterales</taxon>
        <taxon>Erwiniaceae</taxon>
        <taxon>Buchnera</taxon>
    </lineage>
</organism>
<accession>Q9AQC8</accession>
<evidence type="ECO:0000250" key="1"/>
<evidence type="ECO:0000305" key="2"/>
<reference key="1">
    <citation type="journal article" date="2001" name="J. Bacteriol.">
        <title>Vertical transmission of biosynthetic plasmids in aphid endosymbionts (Buchnera).</title>
        <authorList>
            <person name="Wernegreen J.J."/>
            <person name="Moran N.A."/>
        </authorList>
    </citation>
    <scope>NUCLEOTIDE SEQUENCE [GENOMIC DNA]</scope>
</reference>
<dbReference type="EC" id="1.1.1.85"/>
<dbReference type="EMBL" id="AH010234">
    <property type="protein sequence ID" value="AAG53464.1"/>
    <property type="molecule type" value="Genomic_DNA"/>
</dbReference>
<dbReference type="SMR" id="Q9AQC8"/>
<dbReference type="UniPathway" id="UPA00048">
    <property type="reaction ID" value="UER00072"/>
</dbReference>
<dbReference type="GO" id="GO:0005829">
    <property type="term" value="C:cytosol"/>
    <property type="evidence" value="ECO:0007669"/>
    <property type="project" value="TreeGrafter"/>
</dbReference>
<dbReference type="GO" id="GO:0003862">
    <property type="term" value="F:3-isopropylmalate dehydrogenase activity"/>
    <property type="evidence" value="ECO:0007669"/>
    <property type="project" value="UniProtKB-EC"/>
</dbReference>
<dbReference type="GO" id="GO:0000287">
    <property type="term" value="F:magnesium ion binding"/>
    <property type="evidence" value="ECO:0007669"/>
    <property type="project" value="InterPro"/>
</dbReference>
<dbReference type="GO" id="GO:0051287">
    <property type="term" value="F:NAD binding"/>
    <property type="evidence" value="ECO:0007669"/>
    <property type="project" value="InterPro"/>
</dbReference>
<dbReference type="GO" id="GO:0009098">
    <property type="term" value="P:L-leucine biosynthetic process"/>
    <property type="evidence" value="ECO:0007669"/>
    <property type="project" value="UniProtKB-UniPathway"/>
</dbReference>
<dbReference type="Gene3D" id="3.40.718.10">
    <property type="entry name" value="Isopropylmalate Dehydrogenase"/>
    <property type="match status" value="1"/>
</dbReference>
<dbReference type="InterPro" id="IPR019818">
    <property type="entry name" value="IsoCit/isopropylmalate_DH_CS"/>
</dbReference>
<dbReference type="InterPro" id="IPR024084">
    <property type="entry name" value="IsoPropMal-DH-like_dom"/>
</dbReference>
<dbReference type="InterPro" id="IPR004429">
    <property type="entry name" value="Isopropylmalate_DH"/>
</dbReference>
<dbReference type="PANTHER" id="PTHR42979">
    <property type="entry name" value="3-ISOPROPYLMALATE DEHYDROGENASE"/>
    <property type="match status" value="1"/>
</dbReference>
<dbReference type="PANTHER" id="PTHR42979:SF1">
    <property type="entry name" value="3-ISOPROPYLMALATE DEHYDROGENASE"/>
    <property type="match status" value="1"/>
</dbReference>
<dbReference type="Pfam" id="PF00180">
    <property type="entry name" value="Iso_dh"/>
    <property type="match status" value="1"/>
</dbReference>
<dbReference type="SMART" id="SM01329">
    <property type="entry name" value="Iso_dh"/>
    <property type="match status" value="1"/>
</dbReference>
<dbReference type="SUPFAM" id="SSF53659">
    <property type="entry name" value="Isocitrate/Isopropylmalate dehydrogenase-like"/>
    <property type="match status" value="1"/>
</dbReference>
<dbReference type="PROSITE" id="PS00470">
    <property type="entry name" value="IDH_IMDH"/>
    <property type="match status" value="1"/>
</dbReference>
<gene>
    <name type="primary">leuB</name>
</gene>